<protein>
    <recommendedName>
        <fullName evidence="3">Glycogen phosphorylase, muscle form</fullName>
        <ecNumber evidence="3">2.4.1.1</ecNumber>
    </recommendedName>
    <alternativeName>
        <fullName>Myophosphorylase</fullName>
    </alternativeName>
</protein>
<gene>
    <name evidence="3" type="primary">PYGM</name>
    <name evidence="6" type="ORF">QccE-10224</name>
</gene>
<dbReference type="EC" id="2.4.1.1" evidence="3"/>
<dbReference type="EMBL" id="AB083327">
    <property type="protein sequence ID" value="BAC20606.1"/>
    <property type="molecule type" value="mRNA"/>
</dbReference>
<dbReference type="RefSeq" id="NP_001270168.1">
    <property type="nucleotide sequence ID" value="NM_001283239.1"/>
</dbReference>
<dbReference type="SMR" id="Q8HXW4"/>
<dbReference type="STRING" id="9541.ENSMFAP00000044502"/>
<dbReference type="CAZy" id="GT35">
    <property type="family name" value="Glycosyltransferase Family 35"/>
</dbReference>
<dbReference type="eggNOG" id="KOG2099">
    <property type="taxonomic scope" value="Eukaryota"/>
</dbReference>
<dbReference type="Proteomes" id="UP000233100">
    <property type="component" value="Unplaced"/>
</dbReference>
<dbReference type="GO" id="GO:0005737">
    <property type="term" value="C:cytoplasm"/>
    <property type="evidence" value="ECO:0007669"/>
    <property type="project" value="TreeGrafter"/>
</dbReference>
<dbReference type="GO" id="GO:0008184">
    <property type="term" value="F:glycogen phosphorylase activity"/>
    <property type="evidence" value="ECO:0000250"/>
    <property type="project" value="UniProtKB"/>
</dbReference>
<dbReference type="GO" id="GO:0000166">
    <property type="term" value="F:nucleotide binding"/>
    <property type="evidence" value="ECO:0007669"/>
    <property type="project" value="UniProtKB-KW"/>
</dbReference>
<dbReference type="GO" id="GO:0030170">
    <property type="term" value="F:pyridoxal phosphate binding"/>
    <property type="evidence" value="ECO:0007669"/>
    <property type="project" value="InterPro"/>
</dbReference>
<dbReference type="GO" id="GO:0005980">
    <property type="term" value="P:glycogen catabolic process"/>
    <property type="evidence" value="ECO:0000250"/>
    <property type="project" value="UniProtKB"/>
</dbReference>
<dbReference type="CDD" id="cd04300">
    <property type="entry name" value="GT35_Glycogen_Phosphorylase"/>
    <property type="match status" value="1"/>
</dbReference>
<dbReference type="FunFam" id="3.40.50.2000:FF:000005">
    <property type="entry name" value="Alpha-1,4 glucan phosphorylase"/>
    <property type="match status" value="1"/>
</dbReference>
<dbReference type="FunFam" id="3.40.50.2000:FF:000153">
    <property type="entry name" value="Alpha-1,4 glucan phosphorylase"/>
    <property type="match status" value="1"/>
</dbReference>
<dbReference type="FunFam" id="3.40.50.2000:FF:000197">
    <property type="entry name" value="Alpha-1,4 glucan phosphorylase"/>
    <property type="match status" value="1"/>
</dbReference>
<dbReference type="Gene3D" id="3.40.50.2000">
    <property type="entry name" value="Glycogen Phosphorylase B"/>
    <property type="match status" value="2"/>
</dbReference>
<dbReference type="InterPro" id="IPR011833">
    <property type="entry name" value="Glycg_phsphrylas"/>
</dbReference>
<dbReference type="InterPro" id="IPR000811">
    <property type="entry name" value="Glyco_trans_35"/>
</dbReference>
<dbReference type="InterPro" id="IPR035090">
    <property type="entry name" value="Pyridoxal_P_attach_site"/>
</dbReference>
<dbReference type="NCBIfam" id="TIGR02093">
    <property type="entry name" value="P_ylase"/>
    <property type="match status" value="1"/>
</dbReference>
<dbReference type="PANTHER" id="PTHR11468">
    <property type="entry name" value="GLYCOGEN PHOSPHORYLASE"/>
    <property type="match status" value="1"/>
</dbReference>
<dbReference type="PANTHER" id="PTHR11468:SF32">
    <property type="entry name" value="GLYCOGEN PHOSPHORYLASE, MUSCLE FORM"/>
    <property type="match status" value="1"/>
</dbReference>
<dbReference type="Pfam" id="PF00343">
    <property type="entry name" value="Phosphorylase"/>
    <property type="match status" value="1"/>
</dbReference>
<dbReference type="PIRSF" id="PIRSF000460">
    <property type="entry name" value="Pprylas_GlgP"/>
    <property type="match status" value="1"/>
</dbReference>
<dbReference type="SUPFAM" id="SSF53756">
    <property type="entry name" value="UDP-Glycosyltransferase/glycogen phosphorylase"/>
    <property type="match status" value="1"/>
</dbReference>
<dbReference type="PROSITE" id="PS00102">
    <property type="entry name" value="PHOSPHORYLASE"/>
    <property type="match status" value="1"/>
</dbReference>
<accession>Q8HXW4</accession>
<proteinExistence type="evidence at transcript level"/>
<organism>
    <name type="scientific">Macaca fascicularis</name>
    <name type="common">Crab-eating macaque</name>
    <name type="synonym">Cynomolgus monkey</name>
    <dbReference type="NCBI Taxonomy" id="9541"/>
    <lineage>
        <taxon>Eukaryota</taxon>
        <taxon>Metazoa</taxon>
        <taxon>Chordata</taxon>
        <taxon>Craniata</taxon>
        <taxon>Vertebrata</taxon>
        <taxon>Euteleostomi</taxon>
        <taxon>Mammalia</taxon>
        <taxon>Eutheria</taxon>
        <taxon>Euarchontoglires</taxon>
        <taxon>Primates</taxon>
        <taxon>Haplorrhini</taxon>
        <taxon>Catarrhini</taxon>
        <taxon>Cercopithecidae</taxon>
        <taxon>Cercopithecinae</taxon>
        <taxon>Macaca</taxon>
    </lineage>
</organism>
<name>PYGM_MACFA</name>
<evidence type="ECO:0000250" key="1">
    <source>
        <dbReference type="UniProtKB" id="P00489"/>
    </source>
</evidence>
<evidence type="ECO:0000250" key="2">
    <source>
        <dbReference type="UniProtKB" id="P09812"/>
    </source>
</evidence>
<evidence type="ECO:0000250" key="3">
    <source>
        <dbReference type="UniProtKB" id="P11217"/>
    </source>
</evidence>
<evidence type="ECO:0000250" key="4">
    <source>
        <dbReference type="UniProtKB" id="Q9WUB3"/>
    </source>
</evidence>
<evidence type="ECO:0000305" key="5"/>
<evidence type="ECO:0000312" key="6">
    <source>
        <dbReference type="EMBL" id="BAC20606.1"/>
    </source>
</evidence>
<reference key="1">
    <citation type="submission" date="2002-04" db="EMBL/GenBank/DDBJ databases">
        <title>Isolation and characterization of cDNA for macaque neurological disease genes.</title>
        <authorList>
            <person name="Kusuda J."/>
            <person name="Osada N."/>
            <person name="Hida M."/>
            <person name="Sugano S."/>
            <person name="Hashimoto K."/>
        </authorList>
    </citation>
    <scope>NUCLEOTIDE SEQUENCE [LARGE SCALE MRNA]</scope>
    <source>
        <tissue>Brain cortex</tissue>
    </source>
</reference>
<comment type="function">
    <text evidence="3">Allosteric enzyme that catalyzes the rate-limiting step in glycogen catabolism, the phosphorolytic cleavage of glycogen to produce glucose-1-phosphate, and plays a central role in maintaining cellular and organismal glucose homeostasis.</text>
</comment>
<comment type="catalytic activity">
    <reaction evidence="3">
        <text>[(1-&gt;4)-alpha-D-glucosyl](n) + phosphate = [(1-&gt;4)-alpha-D-glucosyl](n-1) + alpha-D-glucose 1-phosphate</text>
        <dbReference type="Rhea" id="RHEA:41732"/>
        <dbReference type="Rhea" id="RHEA-COMP:9584"/>
        <dbReference type="Rhea" id="RHEA-COMP:9586"/>
        <dbReference type="ChEBI" id="CHEBI:15444"/>
        <dbReference type="ChEBI" id="CHEBI:43474"/>
        <dbReference type="ChEBI" id="CHEBI:58601"/>
        <dbReference type="EC" id="2.4.1.1"/>
    </reaction>
    <physiologicalReaction direction="left-to-right" evidence="3">
        <dbReference type="Rhea" id="RHEA:41733"/>
    </physiologicalReaction>
</comment>
<comment type="cofactor">
    <cofactor evidence="1">
        <name>pyridoxal 5'-phosphate</name>
        <dbReference type="ChEBI" id="CHEBI:597326"/>
    </cofactor>
</comment>
<comment type="activity regulation">
    <text evidence="3">Allosterically regulated through the non-covalent binding of metabolites, being activated by AMP and inhibited by ATP, ADP, and glucose-6-phosphate. The activity is also controlled by post-translational modifications including phosphorylation.</text>
</comment>
<comment type="subunit">
    <text evidence="3">Homodimer. Homotetramer; to form the enzymatically active phosphorylase A.</text>
</comment>
<comment type="PTM">
    <text evidence="3">Phosphorylation of Ser-15 converts phosphorylase B (unphosphorylated) to phosphorylase A.</text>
</comment>
<comment type="similarity">
    <text evidence="5">Belongs to the glycogen phosphorylase family.</text>
</comment>
<feature type="initiator methionine" description="Removed" evidence="1">
    <location>
        <position position="1"/>
    </location>
</feature>
<feature type="chain" id="PRO_0000188530" description="Glycogen phosphorylase, muscle form">
    <location>
        <begin position="2"/>
        <end position="842"/>
    </location>
</feature>
<feature type="binding site" evidence="3">
    <location>
        <position position="43"/>
    </location>
    <ligand>
        <name>AMP</name>
        <dbReference type="ChEBI" id="CHEBI:456215"/>
    </ligand>
</feature>
<feature type="binding site" evidence="1">
    <location>
        <position position="76"/>
    </location>
    <ligand>
        <name>AMP</name>
        <dbReference type="ChEBI" id="CHEBI:456215"/>
    </ligand>
</feature>
<feature type="binding site" evidence="3">
    <location>
        <begin position="310"/>
        <end position="319"/>
    </location>
    <ligand>
        <name>AMP</name>
        <dbReference type="ChEBI" id="CHEBI:456215"/>
    </ligand>
</feature>
<feature type="site" description="Involved in the association of subunits" evidence="1">
    <location>
        <position position="109"/>
    </location>
</feature>
<feature type="site" description="Involved in the association of subunits" evidence="1">
    <location>
        <position position="143"/>
    </location>
</feature>
<feature type="site" description="May be involved in allosteric control" evidence="1">
    <location>
        <position position="156"/>
    </location>
</feature>
<feature type="modified residue" description="N-acetylserine" evidence="1">
    <location>
        <position position="2"/>
    </location>
</feature>
<feature type="modified residue" description="Phosphoserine; by PHK; in form phosphorylase A" evidence="3">
    <location>
        <position position="15"/>
    </location>
</feature>
<feature type="modified residue" description="Phosphotyrosine" evidence="2">
    <location>
        <position position="204"/>
    </location>
</feature>
<feature type="modified residue" description="Phosphotyrosine" evidence="2">
    <location>
        <position position="227"/>
    </location>
</feature>
<feature type="modified residue" description="Phosphoserine" evidence="4">
    <location>
        <position position="430"/>
    </location>
</feature>
<feature type="modified residue" description="Phosphotyrosine" evidence="4">
    <location>
        <position position="473"/>
    </location>
</feature>
<feature type="modified residue" description="Phosphoserine" evidence="2">
    <location>
        <position position="514"/>
    </location>
</feature>
<feature type="modified residue" description="N6-(pyridoxal phosphate)lysine" evidence="1">
    <location>
        <position position="681"/>
    </location>
</feature>
<feature type="modified residue" description="Phosphoserine" evidence="2">
    <location>
        <position position="747"/>
    </location>
</feature>
<feature type="modified residue" description="Phosphoserine" evidence="2">
    <location>
        <position position="748"/>
    </location>
</feature>
<sequence>MSRPLSDQEKRKQISVRGLAGVENVTELKKNFNRHLHFTLVKDRNVATPRDYYFALAHTVRDHLVGRWIRTQQHYYEKDPKRIYYLSLEFYMGRTLQNTMVNLALENACDEATYQLGLDMEELEEIEEDAGLGNGGLGRLAACFLDSMATLGLAAYGYGIRYEFGIFNQKISGGWQMEEADVWLRYGNPWEKARPEFTLPVHFYGHVEHTSQGAKWVDTQVVLAMPYDTPVPGYRNNVVNTMRLWSAKAPNDFNLKDFNVGGYIQAVLDRNLAENIPRVLYPNDNFFEGKELRLKQEYFVVAATLQDIIRRFKSSKFGCRDPVRTNFDAFPDKVAIQLNDTHPSLAIPELMRILVDLERMDWDKAWDVTVRTCAYTNHTVLPEALERWPVHLLETLLPRHLQIIYEINQRFLNRVAATFPGDVDRLRRMSLVEEGAVKRINMAHLCIAGSHAVNGVARIHSEILKKTIFKDFYELEPHKFQNKTNGITPRRWLVLCNPGLAEVIAERIGEDFISDLDQLRKLLSFVDDEAFIRDVAKVKQENKLKFAAYLEREYKVHINPNSLFDIQVKRIHEYKRQLLNCLHVITLYNRIKREPNKFFVPRTVMIGGKAAPGHHMAKMIIRLITAIGDVVNHDPTVGDRLRVIFLENYRVSLSEKVIPAADLSEQISTAGTEASGTGNMKFMLNGALTIGTMDGANVEMAEEAGEENFFIFGMRVEDVDKLDQRGYNAQEYYDRIPELRQVIEQLSSGFFSPKQPDLFKDIVNMLMHHDRFKVFADYEDYIKCQEKVSALYKNPREWTRMVIRNIATSGKFSSDRTIAQYAREIWGVEPSRQRLPAPDEAI</sequence>
<keyword id="KW-0007">Acetylation</keyword>
<keyword id="KW-0021">Allosteric enzyme</keyword>
<keyword id="KW-0119">Carbohydrate metabolism</keyword>
<keyword id="KW-0321">Glycogen metabolism</keyword>
<keyword id="KW-0328">Glycosyltransferase</keyword>
<keyword id="KW-0547">Nucleotide-binding</keyword>
<keyword id="KW-0597">Phosphoprotein</keyword>
<keyword id="KW-0663">Pyridoxal phosphate</keyword>
<keyword id="KW-1185">Reference proteome</keyword>
<keyword id="KW-0808">Transferase</keyword>